<keyword id="KW-0328">Glycosyltransferase</keyword>
<keyword id="KW-0337">GPI-anchor biosynthesis</keyword>
<keyword id="KW-0472">Membrane</keyword>
<keyword id="KW-1185">Reference proteome</keyword>
<keyword id="KW-0808">Transferase</keyword>
<keyword id="KW-0812">Transmembrane</keyword>
<keyword id="KW-1133">Transmembrane helix</keyword>
<evidence type="ECO:0000255" key="1"/>
<evidence type="ECO:0000269" key="2">
    <source>
    </source>
</evidence>
<evidence type="ECO:0000305" key="3"/>
<evidence type="ECO:0000305" key="4">
    <source>
    </source>
</evidence>
<feature type="chain" id="PRO_0000087556" description="Phosphatidylinositol N-acetylglucosaminyltransferase subunit GPI15">
    <location>
        <begin position="1"/>
        <end position="229"/>
    </location>
</feature>
<feature type="transmembrane region" description="Helical" evidence="1">
    <location>
        <begin position="59"/>
        <end position="79"/>
    </location>
</feature>
<feature type="transmembrane region" description="Helical" evidence="1">
    <location>
        <begin position="101"/>
        <end position="121"/>
    </location>
</feature>
<feature type="sequence conflict" description="In Ref. 3; AAT93131." evidence="3" ref="3">
    <original>K</original>
    <variation>E</variation>
    <location>
        <position position="10"/>
    </location>
</feature>
<sequence length="229" mass="26817">MISKEYEFGKTSILNRKKYTLVIDEDKNGNFIRFTVLPVSNRKFKKVKQNGRVEINMGIQYHQIVLILLLNILFYVICLRSRFLEHINRTFEVTIARSFQILIIMGLFALGTIILVRGPSVETVTIFKESGLQLSRVKGMVIFPQQWNRKFFEQVEFISNERIIDVVINEGFCRGFRVIFYLAAIVRKSSTLKLLFPSNLPSIDDQRLIYNISRKYLSKQEKPLSRPKD</sequence>
<protein>
    <recommendedName>
        <fullName>Phosphatidylinositol N-acetylglucosaminyltransferase subunit GPI15</fullName>
        <shortName>GPI-GlcNAc transferase complex subunit GPI5</shortName>
        <shortName>GPI-GnT subunit GPI5</shortName>
        <ecNumber>2.4.1.198</ecNumber>
    </recommendedName>
    <alternativeName>
        <fullName>PIGH homolog</fullName>
    </alternativeName>
</protein>
<dbReference type="EC" id="2.4.1.198"/>
<dbReference type="EMBL" id="Z71314">
    <property type="protein sequence ID" value="CAA95905.1"/>
    <property type="status" value="ALT_SEQ"/>
    <property type="molecule type" value="Genomic_DNA"/>
</dbReference>
<dbReference type="EMBL" id="AY693112">
    <property type="protein sequence ID" value="AAT93131.1"/>
    <property type="status" value="ALT_SEQ"/>
    <property type="molecule type" value="Genomic_DNA"/>
</dbReference>
<dbReference type="EMBL" id="BK006947">
    <property type="protein sequence ID" value="DAA10507.1"/>
    <property type="molecule type" value="Genomic_DNA"/>
</dbReference>
<dbReference type="PIR" id="S62960">
    <property type="entry name" value="S62960"/>
</dbReference>
<dbReference type="RefSeq" id="NP_014360.2">
    <property type="nucleotide sequence ID" value="NM_001182877.1"/>
</dbReference>
<dbReference type="SMR" id="P53961"/>
<dbReference type="BioGRID" id="35786">
    <property type="interactions" value="278"/>
</dbReference>
<dbReference type="ComplexPortal" id="CPX-1274">
    <property type="entry name" value="Glycosylphosphatidylinositol-N-acetylglucosaminyltransferase complex"/>
</dbReference>
<dbReference type="DIP" id="DIP-6356N"/>
<dbReference type="FunCoup" id="P53961">
    <property type="interactions" value="95"/>
</dbReference>
<dbReference type="IntAct" id="P53961">
    <property type="interactions" value="1"/>
</dbReference>
<dbReference type="STRING" id="4932.YNL038W"/>
<dbReference type="PaxDb" id="4932-YNL038W"/>
<dbReference type="PeptideAtlas" id="P53961"/>
<dbReference type="EnsemblFungi" id="YNL038W_mRNA">
    <property type="protein sequence ID" value="YNL038W"/>
    <property type="gene ID" value="YNL038W"/>
</dbReference>
<dbReference type="GeneID" id="855690"/>
<dbReference type="KEGG" id="sce:YNL038W"/>
<dbReference type="AGR" id="SGD:S000004983"/>
<dbReference type="SGD" id="S000004983">
    <property type="gene designation" value="GPI15"/>
</dbReference>
<dbReference type="VEuPathDB" id="FungiDB:YNL038W"/>
<dbReference type="eggNOG" id="ENOG502S6Z2">
    <property type="taxonomic scope" value="Eukaryota"/>
</dbReference>
<dbReference type="HOGENOM" id="CLU_106408_0_0_1"/>
<dbReference type="InParanoid" id="P53961"/>
<dbReference type="OMA" id="NASAFWI"/>
<dbReference type="OrthoDB" id="6256716at2759"/>
<dbReference type="BioCyc" id="YEAST:G3O-33074-MONOMER"/>
<dbReference type="UniPathway" id="UPA00196"/>
<dbReference type="BioGRID-ORCS" id="855690">
    <property type="hits" value="1 hit in 10 CRISPR screens"/>
</dbReference>
<dbReference type="PRO" id="PR:P53961"/>
<dbReference type="Proteomes" id="UP000002311">
    <property type="component" value="Chromosome XIV"/>
</dbReference>
<dbReference type="RNAct" id="P53961">
    <property type="molecule type" value="protein"/>
</dbReference>
<dbReference type="GO" id="GO:0005789">
    <property type="term" value="C:endoplasmic reticulum membrane"/>
    <property type="evidence" value="ECO:0000303"/>
    <property type="project" value="ComplexPortal"/>
</dbReference>
<dbReference type="GO" id="GO:0000506">
    <property type="term" value="C:glycosylphosphatidylinositol-N-acetylglucosaminyltransferase (GPI-GnT) complex"/>
    <property type="evidence" value="ECO:0000247"/>
    <property type="project" value="SGD"/>
</dbReference>
<dbReference type="GO" id="GO:0016020">
    <property type="term" value="C:membrane"/>
    <property type="evidence" value="ECO:0000255"/>
    <property type="project" value="SGD"/>
</dbReference>
<dbReference type="GO" id="GO:0017176">
    <property type="term" value="F:phosphatidylinositol N-acetylglucosaminyltransferase activity"/>
    <property type="evidence" value="ECO:0007669"/>
    <property type="project" value="UniProtKB-EC"/>
</dbReference>
<dbReference type="GO" id="GO:0031505">
    <property type="term" value="P:fungal-type cell wall organization"/>
    <property type="evidence" value="ECO:0000303"/>
    <property type="project" value="ComplexPortal"/>
</dbReference>
<dbReference type="GO" id="GO:0006506">
    <property type="term" value="P:GPI anchor biosynthetic process"/>
    <property type="evidence" value="ECO:0000315"/>
    <property type="project" value="SGD"/>
</dbReference>
<dbReference type="InterPro" id="IPR019328">
    <property type="entry name" value="GPI-GlcNAc_Trfase_PIG-H_dom"/>
</dbReference>
<dbReference type="InterPro" id="IPR044215">
    <property type="entry name" value="PIG-H"/>
</dbReference>
<dbReference type="PANTHER" id="PTHR15231">
    <property type="entry name" value="PHOSPHATIDYLINOSITOL N-ACETYLGLUCOSAMINYLTRANSFERASE SUBUNIT H"/>
    <property type="match status" value="1"/>
</dbReference>
<dbReference type="PANTHER" id="PTHR15231:SF1">
    <property type="entry name" value="PHOSPHATIDYLINOSITOL N-ACETYLGLUCOSAMINYLTRANSFERASE SUBUNIT H"/>
    <property type="match status" value="1"/>
</dbReference>
<dbReference type="Pfam" id="PF10181">
    <property type="entry name" value="PIG-H"/>
    <property type="match status" value="1"/>
</dbReference>
<comment type="function">
    <text evidence="2">Part of the complex catalyzing the transfer of N-acetylglucosamine from UDP-N-acetylglucosamine to phosphatidylinositol, the first step of GPI biosynthesis.</text>
</comment>
<comment type="catalytic activity">
    <reaction>
        <text>a 1,2-diacyl-sn-glycero-3-phospho-(1D-myo-inositol) + UDP-N-acetyl-alpha-D-glucosamine = a 6-(N-acetyl-alpha-D-glucosaminyl)-1-(1,2-diacyl-sn-glycero-3-phospho)-1D-myo-inositol + UDP + H(+)</text>
        <dbReference type="Rhea" id="RHEA:14789"/>
        <dbReference type="ChEBI" id="CHEBI:15378"/>
        <dbReference type="ChEBI" id="CHEBI:57265"/>
        <dbReference type="ChEBI" id="CHEBI:57705"/>
        <dbReference type="ChEBI" id="CHEBI:57880"/>
        <dbReference type="ChEBI" id="CHEBI:58223"/>
        <dbReference type="EC" id="2.4.1.198"/>
    </reaction>
</comment>
<comment type="pathway">
    <text>Glycolipid biosynthesis; glycosylphosphatidylinositol-anchor biosynthesis.</text>
</comment>
<comment type="subunit">
    <text evidence="4">Component of the phosphatidylinositol N-acetylglucosaminyltransferase (GPI-GlcNAc transferase) complex composed of at least GPI1, GPI2, GPI3, GPI15, GPI19 and ERI1.</text>
</comment>
<comment type="subcellular location">
    <subcellularLocation>
        <location evidence="3">Membrane</location>
        <topology evidence="3">Multi-pass membrane protein</topology>
    </subcellularLocation>
</comment>
<comment type="similarity">
    <text evidence="3">Belongs to the PIGH family.</text>
</comment>
<comment type="sequence caution" evidence="3">
    <conflict type="erroneous gene model prediction">
        <sequence resource="EMBL-CDS" id="AAT93131"/>
    </conflict>
</comment>
<comment type="sequence caution" evidence="3">
    <conflict type="erroneous gene model prediction">
        <sequence resource="EMBL-CDS" id="CAA95905"/>
    </conflict>
</comment>
<accession>P53961</accession>
<accession>D6W1E1</accession>
<accession>Q6B1G8</accession>
<organism>
    <name type="scientific">Saccharomyces cerevisiae (strain ATCC 204508 / S288c)</name>
    <name type="common">Baker's yeast</name>
    <dbReference type="NCBI Taxonomy" id="559292"/>
    <lineage>
        <taxon>Eukaryota</taxon>
        <taxon>Fungi</taxon>
        <taxon>Dikarya</taxon>
        <taxon>Ascomycota</taxon>
        <taxon>Saccharomycotina</taxon>
        <taxon>Saccharomycetes</taxon>
        <taxon>Saccharomycetales</taxon>
        <taxon>Saccharomycetaceae</taxon>
        <taxon>Saccharomyces</taxon>
    </lineage>
</organism>
<name>GPI15_YEAST</name>
<gene>
    <name type="primary">GPI15</name>
    <name type="ordered locus">YNL038W</name>
    <name type="ORF">N2687</name>
</gene>
<proteinExistence type="inferred from homology"/>
<reference key="1">
    <citation type="journal article" date="1997" name="Nature">
        <title>The nucleotide sequence of Saccharomyces cerevisiae chromosome XIV and its evolutionary implications.</title>
        <authorList>
            <person name="Philippsen P."/>
            <person name="Kleine K."/>
            <person name="Poehlmann R."/>
            <person name="Duesterhoeft A."/>
            <person name="Hamberg K."/>
            <person name="Hegemann J.H."/>
            <person name="Obermaier B."/>
            <person name="Urrestarazu L.A."/>
            <person name="Aert R."/>
            <person name="Albermann K."/>
            <person name="Altmann R."/>
            <person name="Andre B."/>
            <person name="Baladron V."/>
            <person name="Ballesta J.P.G."/>
            <person name="Becam A.-M."/>
            <person name="Beinhauer J.D."/>
            <person name="Boskovic J."/>
            <person name="Buitrago M.J."/>
            <person name="Bussereau F."/>
            <person name="Coster F."/>
            <person name="Crouzet M."/>
            <person name="D'Angelo M."/>
            <person name="Dal Pero F."/>
            <person name="De Antoni A."/>
            <person name="del Rey F."/>
            <person name="Doignon F."/>
            <person name="Domdey H."/>
            <person name="Dubois E."/>
            <person name="Fiedler T.A."/>
            <person name="Fleig U."/>
            <person name="Floeth M."/>
            <person name="Fritz C."/>
            <person name="Gaillardin C."/>
            <person name="Garcia-Cantalejo J.M."/>
            <person name="Glansdorff N."/>
            <person name="Goffeau A."/>
            <person name="Gueldener U."/>
            <person name="Herbert C.J."/>
            <person name="Heumann K."/>
            <person name="Heuss-Neitzel D."/>
            <person name="Hilbert H."/>
            <person name="Hinni K."/>
            <person name="Iraqui Houssaini I."/>
            <person name="Jacquet M."/>
            <person name="Jimenez A."/>
            <person name="Jonniaux J.-L."/>
            <person name="Karpfinger-Hartl L."/>
            <person name="Lanfranchi G."/>
            <person name="Lepingle A."/>
            <person name="Levesque H."/>
            <person name="Lyck R."/>
            <person name="Maftahi M."/>
            <person name="Mallet L."/>
            <person name="Maurer C.T.C."/>
            <person name="Messenguy F."/>
            <person name="Mewes H.-W."/>
            <person name="Moestl D."/>
            <person name="Nasr F."/>
            <person name="Nicaud J.-M."/>
            <person name="Niedenthal R.K."/>
            <person name="Pandolfo D."/>
            <person name="Pierard A."/>
            <person name="Piravandi E."/>
            <person name="Planta R.J."/>
            <person name="Pohl T.M."/>
            <person name="Purnelle B."/>
            <person name="Rebischung C."/>
            <person name="Remacha M.A."/>
            <person name="Revuelta J.L."/>
            <person name="Rinke M."/>
            <person name="Saiz J.E."/>
            <person name="Sartorello F."/>
            <person name="Scherens B."/>
            <person name="Sen-Gupta M."/>
            <person name="Soler-Mira A."/>
            <person name="Urbanus J.H.M."/>
            <person name="Valle G."/>
            <person name="Van Dyck L."/>
            <person name="Verhasselt P."/>
            <person name="Vierendeels F."/>
            <person name="Vissers S."/>
            <person name="Voet M."/>
            <person name="Volckaert G."/>
            <person name="Wach A."/>
            <person name="Wambutt R."/>
            <person name="Wedler H."/>
            <person name="Zollner A."/>
            <person name="Hani J."/>
        </authorList>
    </citation>
    <scope>NUCLEOTIDE SEQUENCE [LARGE SCALE GENOMIC DNA]</scope>
    <source>
        <strain>ATCC 204508 / S288c</strain>
    </source>
</reference>
<reference key="2">
    <citation type="journal article" date="2014" name="G3 (Bethesda)">
        <title>The reference genome sequence of Saccharomyces cerevisiae: Then and now.</title>
        <authorList>
            <person name="Engel S.R."/>
            <person name="Dietrich F.S."/>
            <person name="Fisk D.G."/>
            <person name="Binkley G."/>
            <person name="Balakrishnan R."/>
            <person name="Costanzo M.C."/>
            <person name="Dwight S.S."/>
            <person name="Hitz B.C."/>
            <person name="Karra K."/>
            <person name="Nash R.S."/>
            <person name="Weng S."/>
            <person name="Wong E.D."/>
            <person name="Lloyd P."/>
            <person name="Skrzypek M.S."/>
            <person name="Miyasato S.R."/>
            <person name="Simison M."/>
            <person name="Cherry J.M."/>
        </authorList>
    </citation>
    <scope>GENOME REANNOTATION</scope>
    <source>
        <strain>ATCC 204508 / S288c</strain>
    </source>
</reference>
<reference key="3">
    <citation type="journal article" date="2007" name="Genome Res.">
        <title>Approaching a complete repository of sequence-verified protein-encoding clones for Saccharomyces cerevisiae.</title>
        <authorList>
            <person name="Hu Y."/>
            <person name="Rolfs A."/>
            <person name="Bhullar B."/>
            <person name="Murthy T.V.S."/>
            <person name="Zhu C."/>
            <person name="Berger M.F."/>
            <person name="Camargo A.A."/>
            <person name="Kelley F."/>
            <person name="McCarron S."/>
            <person name="Jepson D."/>
            <person name="Richardson A."/>
            <person name="Raphael J."/>
            <person name="Moreira D."/>
            <person name="Taycher E."/>
            <person name="Zuo D."/>
            <person name="Mohr S."/>
            <person name="Kane M.F."/>
            <person name="Williamson J."/>
            <person name="Simpson A.J.G."/>
            <person name="Bulyk M.L."/>
            <person name="Harlow E."/>
            <person name="Marsischky G."/>
            <person name="Kolodner R.D."/>
            <person name="LaBaer J."/>
        </authorList>
    </citation>
    <scope>NUCLEOTIDE SEQUENCE [GENOMIC DNA] OF 1-197</scope>
    <source>
        <strain>ATCC 204508 / S288c</strain>
    </source>
</reference>
<reference key="4">
    <citation type="journal article" date="2001" name="Yeast">
        <title>Ynl038wp (Gpi15p) is the Saccharomyces cerevisiae homologue of human Pig-Hp and participates in the first step in glycosylphosphatidylinositol assembly.</title>
        <authorList>
            <person name="Yan B.C."/>
            <person name="Westfall B.A."/>
            <person name="Orlean P."/>
        </authorList>
    </citation>
    <scope>FUNCTION</scope>
</reference>
<reference key="5">
    <citation type="journal article" date="2003" name="Science">
        <title>Finding functional features in Saccharomyces genomes by phylogenetic footprinting.</title>
        <authorList>
            <person name="Cliften P.F."/>
            <person name="Sudarsanam P."/>
            <person name="Desikan A."/>
            <person name="Fulton L."/>
            <person name="Fulton B."/>
            <person name="Majors J."/>
            <person name="Waterston R."/>
            <person name="Cohen B.A."/>
            <person name="Johnston M."/>
        </authorList>
    </citation>
    <scope>REVISION OF GENE MODEL</scope>
</reference>